<evidence type="ECO:0000255" key="1">
    <source>
        <dbReference type="HAMAP-Rule" id="MF_01916"/>
    </source>
</evidence>
<keyword id="KW-1003">Cell membrane</keyword>
<keyword id="KW-0444">Lipid biosynthesis</keyword>
<keyword id="KW-0443">Lipid metabolism</keyword>
<keyword id="KW-0472">Membrane</keyword>
<keyword id="KW-0594">Phospholipid biosynthesis</keyword>
<keyword id="KW-1208">Phospholipid metabolism</keyword>
<keyword id="KW-1185">Reference proteome</keyword>
<keyword id="KW-0677">Repeat</keyword>
<keyword id="KW-0808">Transferase</keyword>
<keyword id="KW-0812">Transmembrane</keyword>
<keyword id="KW-1133">Transmembrane helix</keyword>
<proteinExistence type="inferred from homology"/>
<reference key="1">
    <citation type="journal article" date="2005" name="J. Bacteriol.">
        <title>Insights on evolution of virulence and resistance from the complete genome analysis of an early methicillin-resistant Staphylococcus aureus strain and a biofilm-producing methicillin-resistant Staphylococcus epidermidis strain.</title>
        <authorList>
            <person name="Gill S.R."/>
            <person name="Fouts D.E."/>
            <person name="Archer G.L."/>
            <person name="Mongodin E.F."/>
            <person name="DeBoy R.T."/>
            <person name="Ravel J."/>
            <person name="Paulsen I.T."/>
            <person name="Kolonay J.F."/>
            <person name="Brinkac L.M."/>
            <person name="Beanan M.J."/>
            <person name="Dodson R.J."/>
            <person name="Daugherty S.C."/>
            <person name="Madupu R."/>
            <person name="Angiuoli S.V."/>
            <person name="Durkin A.S."/>
            <person name="Haft D.H."/>
            <person name="Vamathevan J.J."/>
            <person name="Khouri H."/>
            <person name="Utterback T.R."/>
            <person name="Lee C."/>
            <person name="Dimitrov G."/>
            <person name="Jiang L."/>
            <person name="Qin H."/>
            <person name="Weidman J."/>
            <person name="Tran K."/>
            <person name="Kang K.H."/>
            <person name="Hance I.R."/>
            <person name="Nelson K.E."/>
            <person name="Fraser C.M."/>
        </authorList>
    </citation>
    <scope>NUCLEOTIDE SEQUENCE [LARGE SCALE GENOMIC DNA]</scope>
    <source>
        <strain>ATCC 35984 / DSM 28319 / BCRC 17069 / CCUG 31568 / BM 3577 / RP62A</strain>
    </source>
</reference>
<gene>
    <name type="primary">cls2</name>
    <name type="ordered locus">SERP1695</name>
</gene>
<dbReference type="EC" id="2.7.8.-" evidence="1"/>
<dbReference type="EMBL" id="CP000029">
    <property type="protein sequence ID" value="AAW55065.1"/>
    <property type="molecule type" value="Genomic_DNA"/>
</dbReference>
<dbReference type="SMR" id="Q5HMD3"/>
<dbReference type="STRING" id="176279.SERP1695"/>
<dbReference type="KEGG" id="ser:SERP1695"/>
<dbReference type="eggNOG" id="COG1502">
    <property type="taxonomic scope" value="Bacteria"/>
</dbReference>
<dbReference type="HOGENOM" id="CLU_038053_1_1_9"/>
<dbReference type="Proteomes" id="UP000000531">
    <property type="component" value="Chromosome"/>
</dbReference>
<dbReference type="GO" id="GO:0005886">
    <property type="term" value="C:plasma membrane"/>
    <property type="evidence" value="ECO:0007669"/>
    <property type="project" value="UniProtKB-SubCell"/>
</dbReference>
<dbReference type="GO" id="GO:0008808">
    <property type="term" value="F:cardiolipin synthase activity"/>
    <property type="evidence" value="ECO:0007669"/>
    <property type="project" value="InterPro"/>
</dbReference>
<dbReference type="GO" id="GO:0032049">
    <property type="term" value="P:cardiolipin biosynthetic process"/>
    <property type="evidence" value="ECO:0007669"/>
    <property type="project" value="InterPro"/>
</dbReference>
<dbReference type="CDD" id="cd09110">
    <property type="entry name" value="PLDc_CLS_1"/>
    <property type="match status" value="1"/>
</dbReference>
<dbReference type="CDD" id="cd09112">
    <property type="entry name" value="PLDc_CLS_2"/>
    <property type="match status" value="1"/>
</dbReference>
<dbReference type="FunFam" id="3.30.870.10:FF:000014">
    <property type="entry name" value="Cardiolipin synthase"/>
    <property type="match status" value="1"/>
</dbReference>
<dbReference type="FunFam" id="3.30.870.10:FF:000021">
    <property type="entry name" value="Cardiolipin synthase"/>
    <property type="match status" value="1"/>
</dbReference>
<dbReference type="Gene3D" id="3.30.870.10">
    <property type="entry name" value="Endonuclease Chain A"/>
    <property type="match status" value="2"/>
</dbReference>
<dbReference type="HAMAP" id="MF_01916">
    <property type="entry name" value="Cardiolipin_synth_Cls"/>
    <property type="match status" value="1"/>
</dbReference>
<dbReference type="InterPro" id="IPR030874">
    <property type="entry name" value="Cardiolipin_synth_Firmi"/>
</dbReference>
<dbReference type="InterPro" id="IPR022924">
    <property type="entry name" value="Cardiolipin_synthase"/>
</dbReference>
<dbReference type="InterPro" id="IPR027379">
    <property type="entry name" value="CLS_N"/>
</dbReference>
<dbReference type="InterPro" id="IPR025202">
    <property type="entry name" value="PLD-like_dom"/>
</dbReference>
<dbReference type="InterPro" id="IPR001736">
    <property type="entry name" value="PLipase_D/transphosphatidylase"/>
</dbReference>
<dbReference type="NCBIfam" id="TIGR04265">
    <property type="entry name" value="bac_cardiolipin"/>
    <property type="match status" value="1"/>
</dbReference>
<dbReference type="PANTHER" id="PTHR21248">
    <property type="entry name" value="CARDIOLIPIN SYNTHASE"/>
    <property type="match status" value="1"/>
</dbReference>
<dbReference type="PANTHER" id="PTHR21248:SF22">
    <property type="entry name" value="PHOSPHOLIPASE D"/>
    <property type="match status" value="1"/>
</dbReference>
<dbReference type="Pfam" id="PF13091">
    <property type="entry name" value="PLDc_2"/>
    <property type="match status" value="2"/>
</dbReference>
<dbReference type="Pfam" id="PF13396">
    <property type="entry name" value="PLDc_N"/>
    <property type="match status" value="1"/>
</dbReference>
<dbReference type="SMART" id="SM00155">
    <property type="entry name" value="PLDc"/>
    <property type="match status" value="2"/>
</dbReference>
<dbReference type="SUPFAM" id="SSF56024">
    <property type="entry name" value="Phospholipase D/nuclease"/>
    <property type="match status" value="2"/>
</dbReference>
<dbReference type="PROSITE" id="PS50035">
    <property type="entry name" value="PLD"/>
    <property type="match status" value="2"/>
</dbReference>
<protein>
    <recommendedName>
        <fullName evidence="1">Cardiolipin synthase 2</fullName>
        <shortName evidence="1">CL synthase 2</shortName>
        <ecNumber evidence="1">2.7.8.-</ecNumber>
    </recommendedName>
</protein>
<accession>Q5HMD3</accession>
<sequence length="488" mass="56016">MALHQSNIIINILLVSAFLLNLVFAFIIIFMERRTANSIWAWLLVLVFLPLVGFILYLLLGRQIQREHIFKLAKEDKVGLEMIVDEQLEALKKQDFSKGNHQIVKFKEMVQMLLYNNAAFLTTDNDLTIYTDGHQKFDDLINDIRHAQSYIHIQYYIIHSDNLGKQLLHELEKKAEEGIEVKMLYDDMGSRDLRKKDLKKFRQKGGHAESFFPSKLPLINLRMNNRNHRKIVVIDGTIGYVGGFNVGDEYIGKSKKFGYWRDTHLRIKGDAVNALQLRFILDWNSQSTRDNLTYESRYFPDVDSGGTIGIQIASSGPDEDWEQIKYGYLKMISSAKESIYIQSPYFIPDQAFLDSIKIAALGGVDVNIMVPNKRDHPFVYWATLKNVASLLEAGVNVYHYDNGFLHSKTLVIDDEVASVGTANMDNRSFTLNFEVNAFIYDEGVARSLKQAFINDMKLSNKLTSEEYAKRNLLVKFKEGISQLLSPIL</sequence>
<feature type="chain" id="PRO_0000201278" description="Cardiolipin synthase 2">
    <location>
        <begin position="1"/>
        <end position="488"/>
    </location>
</feature>
<feature type="transmembrane region" description="Helical" evidence="1">
    <location>
        <begin position="8"/>
        <end position="28"/>
    </location>
</feature>
<feature type="transmembrane region" description="Helical" evidence="1">
    <location>
        <begin position="39"/>
        <end position="59"/>
    </location>
</feature>
<feature type="domain" description="PLD phosphodiesterase 1" evidence="1">
    <location>
        <begin position="223"/>
        <end position="250"/>
    </location>
</feature>
<feature type="domain" description="PLD phosphodiesterase 2" evidence="1">
    <location>
        <begin position="401"/>
        <end position="428"/>
    </location>
</feature>
<feature type="active site" evidence="1">
    <location>
        <position position="228"/>
    </location>
</feature>
<feature type="active site" evidence="1">
    <location>
        <position position="230"/>
    </location>
</feature>
<feature type="active site" evidence="1">
    <location>
        <position position="235"/>
    </location>
</feature>
<feature type="active site" evidence="1">
    <location>
        <position position="406"/>
    </location>
</feature>
<feature type="active site" evidence="1">
    <location>
        <position position="408"/>
    </location>
</feature>
<feature type="active site" evidence="1">
    <location>
        <position position="413"/>
    </location>
</feature>
<comment type="function">
    <text evidence="1">Catalyzes the reversible phosphatidyl group transfer from one phosphatidylglycerol molecule to another to form cardiolipin (CL) (diphosphatidylglycerol) and glycerol.</text>
</comment>
<comment type="catalytic activity">
    <reaction evidence="1">
        <text>2 a 1,2-diacyl-sn-glycero-3-phospho-(1'-sn-glycerol) = a cardiolipin + glycerol</text>
        <dbReference type="Rhea" id="RHEA:31451"/>
        <dbReference type="ChEBI" id="CHEBI:17754"/>
        <dbReference type="ChEBI" id="CHEBI:62237"/>
        <dbReference type="ChEBI" id="CHEBI:64716"/>
    </reaction>
</comment>
<comment type="subcellular location">
    <subcellularLocation>
        <location evidence="1">Cell membrane</location>
        <topology evidence="1">Multi-pass membrane protein</topology>
    </subcellularLocation>
</comment>
<comment type="similarity">
    <text evidence="1">Belongs to the phospholipase D family. Cardiolipin synthase subfamily.</text>
</comment>
<organism>
    <name type="scientific">Staphylococcus epidermidis (strain ATCC 35984 / DSM 28319 / BCRC 17069 / CCUG 31568 / BM 3577 / RP62A)</name>
    <dbReference type="NCBI Taxonomy" id="176279"/>
    <lineage>
        <taxon>Bacteria</taxon>
        <taxon>Bacillati</taxon>
        <taxon>Bacillota</taxon>
        <taxon>Bacilli</taxon>
        <taxon>Bacillales</taxon>
        <taxon>Staphylococcaceae</taxon>
        <taxon>Staphylococcus</taxon>
    </lineage>
</organism>
<name>CLS2_STAEQ</name>